<dbReference type="EC" id="1.14.11.-" evidence="1"/>
<dbReference type="EMBL" id="CP000115">
    <property type="protein sequence ID" value="ABA03967.1"/>
    <property type="molecule type" value="Genomic_DNA"/>
</dbReference>
<dbReference type="RefSeq" id="WP_011314023.1">
    <property type="nucleotide sequence ID" value="NC_007406.1"/>
</dbReference>
<dbReference type="SMR" id="Q3SUS4"/>
<dbReference type="STRING" id="323098.Nwi_0701"/>
<dbReference type="KEGG" id="nwi:Nwi_0701"/>
<dbReference type="eggNOG" id="COG3128">
    <property type="taxonomic scope" value="Bacteria"/>
</dbReference>
<dbReference type="HOGENOM" id="CLU_106663_0_0_5"/>
<dbReference type="OrthoDB" id="9812472at2"/>
<dbReference type="Proteomes" id="UP000002531">
    <property type="component" value="Chromosome"/>
</dbReference>
<dbReference type="GO" id="GO:0016706">
    <property type="term" value="F:2-oxoglutarate-dependent dioxygenase activity"/>
    <property type="evidence" value="ECO:0007669"/>
    <property type="project" value="UniProtKB-UniRule"/>
</dbReference>
<dbReference type="GO" id="GO:0005506">
    <property type="term" value="F:iron ion binding"/>
    <property type="evidence" value="ECO:0007669"/>
    <property type="project" value="UniProtKB-UniRule"/>
</dbReference>
<dbReference type="GO" id="GO:0031418">
    <property type="term" value="F:L-ascorbic acid binding"/>
    <property type="evidence" value="ECO:0007669"/>
    <property type="project" value="UniProtKB-KW"/>
</dbReference>
<dbReference type="GO" id="GO:0006974">
    <property type="term" value="P:DNA damage response"/>
    <property type="evidence" value="ECO:0007669"/>
    <property type="project" value="TreeGrafter"/>
</dbReference>
<dbReference type="GO" id="GO:0006879">
    <property type="term" value="P:intracellular iron ion homeostasis"/>
    <property type="evidence" value="ECO:0007669"/>
    <property type="project" value="TreeGrafter"/>
</dbReference>
<dbReference type="Gene3D" id="2.60.120.620">
    <property type="entry name" value="q2cbj1_9rhob like domain"/>
    <property type="match status" value="1"/>
</dbReference>
<dbReference type="Gene3D" id="4.10.860.20">
    <property type="entry name" value="Rabenosyn, Rab binding domain"/>
    <property type="match status" value="1"/>
</dbReference>
<dbReference type="HAMAP" id="MF_00657">
    <property type="entry name" value="Hydroxyl_YbiX"/>
    <property type="match status" value="1"/>
</dbReference>
<dbReference type="InterPro" id="IPR005123">
    <property type="entry name" value="Oxoglu/Fe-dep_dioxygenase_dom"/>
</dbReference>
<dbReference type="InterPro" id="IPR041097">
    <property type="entry name" value="PKHD_C"/>
</dbReference>
<dbReference type="InterPro" id="IPR023550">
    <property type="entry name" value="PKHD_hydroxylase"/>
</dbReference>
<dbReference type="InterPro" id="IPR006620">
    <property type="entry name" value="Pro_4_hyd_alph"/>
</dbReference>
<dbReference type="InterPro" id="IPR044862">
    <property type="entry name" value="Pro_4_hyd_alph_FE2OG_OXY"/>
</dbReference>
<dbReference type="NCBIfam" id="NF003974">
    <property type="entry name" value="PRK05467.1-3"/>
    <property type="match status" value="1"/>
</dbReference>
<dbReference type="NCBIfam" id="NF003975">
    <property type="entry name" value="PRK05467.1-4"/>
    <property type="match status" value="1"/>
</dbReference>
<dbReference type="PANTHER" id="PTHR41536">
    <property type="entry name" value="PKHD-TYPE HYDROXYLASE YBIX"/>
    <property type="match status" value="1"/>
</dbReference>
<dbReference type="PANTHER" id="PTHR41536:SF1">
    <property type="entry name" value="PKHD-TYPE HYDROXYLASE YBIX"/>
    <property type="match status" value="1"/>
</dbReference>
<dbReference type="Pfam" id="PF13640">
    <property type="entry name" value="2OG-FeII_Oxy_3"/>
    <property type="match status" value="1"/>
</dbReference>
<dbReference type="Pfam" id="PF18331">
    <property type="entry name" value="PKHD_C"/>
    <property type="match status" value="1"/>
</dbReference>
<dbReference type="SMART" id="SM00702">
    <property type="entry name" value="P4Hc"/>
    <property type="match status" value="1"/>
</dbReference>
<dbReference type="PROSITE" id="PS51471">
    <property type="entry name" value="FE2OG_OXY"/>
    <property type="match status" value="1"/>
</dbReference>
<accession>Q3SUS4</accession>
<evidence type="ECO:0000255" key="1">
    <source>
        <dbReference type="HAMAP-Rule" id="MF_00657"/>
    </source>
</evidence>
<organism>
    <name type="scientific">Nitrobacter winogradskyi (strain ATCC 25391 / DSM 10237 / CIP 104748 / NCIMB 11846 / Nb-255)</name>
    <dbReference type="NCBI Taxonomy" id="323098"/>
    <lineage>
        <taxon>Bacteria</taxon>
        <taxon>Pseudomonadati</taxon>
        <taxon>Pseudomonadota</taxon>
        <taxon>Alphaproteobacteria</taxon>
        <taxon>Hyphomicrobiales</taxon>
        <taxon>Nitrobacteraceae</taxon>
        <taxon>Nitrobacter</taxon>
    </lineage>
</organism>
<protein>
    <recommendedName>
        <fullName evidence="1">PKHD-type hydroxylase Nwi_0701</fullName>
        <ecNumber evidence="1">1.14.11.-</ecNumber>
    </recommendedName>
</protein>
<gene>
    <name type="ordered locus">Nwi_0701</name>
</gene>
<comment type="cofactor">
    <cofactor evidence="1">
        <name>Fe(2+)</name>
        <dbReference type="ChEBI" id="CHEBI:29033"/>
    </cofactor>
    <text evidence="1">Binds 1 Fe(2+) ion per subunit.</text>
</comment>
<comment type="cofactor">
    <cofactor evidence="1">
        <name>L-ascorbate</name>
        <dbReference type="ChEBI" id="CHEBI:38290"/>
    </cofactor>
</comment>
<feature type="chain" id="PRO_1000061724" description="PKHD-type hydroxylase Nwi_0701">
    <location>
        <begin position="1"/>
        <end position="226"/>
    </location>
</feature>
<feature type="domain" description="Fe2OG dioxygenase" evidence="1">
    <location>
        <begin position="78"/>
        <end position="178"/>
    </location>
</feature>
<feature type="binding site" evidence="1">
    <location>
        <position position="96"/>
    </location>
    <ligand>
        <name>Fe cation</name>
        <dbReference type="ChEBI" id="CHEBI:24875"/>
    </ligand>
</feature>
<feature type="binding site" evidence="1">
    <location>
        <position position="98"/>
    </location>
    <ligand>
        <name>Fe cation</name>
        <dbReference type="ChEBI" id="CHEBI:24875"/>
    </ligand>
</feature>
<feature type="binding site" evidence="1">
    <location>
        <position position="159"/>
    </location>
    <ligand>
        <name>Fe cation</name>
        <dbReference type="ChEBI" id="CHEBI:24875"/>
    </ligand>
</feature>
<feature type="binding site" evidence="1">
    <location>
        <position position="169"/>
    </location>
    <ligand>
        <name>2-oxoglutarate</name>
        <dbReference type="ChEBI" id="CHEBI:16810"/>
    </ligand>
</feature>
<keyword id="KW-0223">Dioxygenase</keyword>
<keyword id="KW-0408">Iron</keyword>
<keyword id="KW-0479">Metal-binding</keyword>
<keyword id="KW-0560">Oxidoreductase</keyword>
<keyword id="KW-1185">Reference proteome</keyword>
<keyword id="KW-0847">Vitamin C</keyword>
<sequence length="226" mass="25142">MIQVISDVLTPDELKRFRELLGQAQWQDGRATAGHVAVRAKANEQLSHEDSLGQQLSEFLLERLGKISHFIAAALPLKVLPPRFNRYTGGGSYGDHIDNAIFSVPGAGVRIRGDLSATLFLSEPGDYDGGELIIQGEFARHQFKLPAGQMILYPASTFHQVTPVTRGARLAAFFWTQSLVREHSRRALLFELDNTIQALAQDNPEQPAVARLTGLYHNLLREWSET</sequence>
<reference key="1">
    <citation type="journal article" date="2006" name="Appl. Environ. Microbiol.">
        <title>Genome sequence of the chemolithoautotrophic nitrite-oxidizing bacterium Nitrobacter winogradskyi Nb-255.</title>
        <authorList>
            <person name="Starkenburg S.R."/>
            <person name="Chain P.S.G."/>
            <person name="Sayavedra-Soto L.A."/>
            <person name="Hauser L."/>
            <person name="Land M.L."/>
            <person name="Larimer F.W."/>
            <person name="Malfatti S.A."/>
            <person name="Klotz M.G."/>
            <person name="Bottomley P.J."/>
            <person name="Arp D.J."/>
            <person name="Hickey W.J."/>
        </authorList>
    </citation>
    <scope>NUCLEOTIDE SEQUENCE [LARGE SCALE GENOMIC DNA]</scope>
    <source>
        <strain>ATCC 25391 / DSM 10237 / CIP 104748 / NCIMB 11846 / Nb-255</strain>
    </source>
</reference>
<proteinExistence type="inferred from homology"/>
<name>Y701_NITWN</name>